<keyword id="KW-1003">Cell membrane</keyword>
<keyword id="KW-0297">G-protein coupled receptor</keyword>
<keyword id="KW-0325">Glycoprotein</keyword>
<keyword id="KW-0449">Lipoprotein</keyword>
<keyword id="KW-0472">Membrane</keyword>
<keyword id="KW-0564">Palmitate</keyword>
<keyword id="KW-1267">Proteomics identification</keyword>
<keyword id="KW-0675">Receptor</keyword>
<keyword id="KW-1185">Reference proteome</keyword>
<keyword id="KW-0807">Transducer</keyword>
<keyword id="KW-0812">Transmembrane</keyword>
<keyword id="KW-1133">Transmembrane helix</keyword>
<name>LPAR3_HUMAN</name>
<proteinExistence type="evidence at protein level"/>
<organism>
    <name type="scientific">Homo sapiens</name>
    <name type="common">Human</name>
    <dbReference type="NCBI Taxonomy" id="9606"/>
    <lineage>
        <taxon>Eukaryota</taxon>
        <taxon>Metazoa</taxon>
        <taxon>Chordata</taxon>
        <taxon>Craniata</taxon>
        <taxon>Vertebrata</taxon>
        <taxon>Euteleostomi</taxon>
        <taxon>Mammalia</taxon>
        <taxon>Eutheria</taxon>
        <taxon>Euarchontoglires</taxon>
        <taxon>Primates</taxon>
        <taxon>Haplorrhini</taxon>
        <taxon>Catarrhini</taxon>
        <taxon>Hominidae</taxon>
        <taxon>Homo</taxon>
    </lineage>
</organism>
<gene>
    <name type="primary">LPAR3</name>
    <name type="synonym">EDG7</name>
    <name type="synonym">LPA3</name>
</gene>
<protein>
    <recommendedName>
        <fullName>Lysophosphatidic acid receptor 3</fullName>
        <shortName>LPA receptor 3</shortName>
        <shortName>LPA-3</shortName>
    </recommendedName>
    <alternativeName>
        <fullName>Lysophosphatidic acid receptor Edg-7</fullName>
    </alternativeName>
</protein>
<sequence>MNECHYDKHMDFFYNRSNTDTVDDWTGTKLVIVLCVGTFFCLFIFFSNSLVIAAVIKNRKFHFPFYYLLANLAAADFFAGIAYVFLMFNTGPVSKTLTVNRWFLRQGLLDSSLTASLTNLLVIAVERHMSIMRMRVHSNLTKKRVTLLILLVWAIAIFMGAVPTLGWNCLCNISACSSLAPIYSRSYLVFWTVSNLMAFLIMVVVYLRIYVYVKRKTNVLSPHTSGSISRRRTPMKLMKTVMTVLGAFVVCWTPGLVVLLLDGLNCRQCGVQHVKRWFLLLALLNSVVNPIIYSYKDEDMYGTMKKMICCFSQENPERRPSRIPSTVLSRSDTGSQYIEDSISQGAVCNKSTS</sequence>
<accession>Q9UBY5</accession>
<accession>A0AVA3</accession>
<comment type="function">
    <text>Receptor for lysophosphatidic acid (LPA), a mediator of diverse cellular activities. May play a role in the development of ovarian cancer. Seems to be coupled to the G(i)/G(o) and G(q) families of heteromeric G proteins.</text>
</comment>
<comment type="interaction">
    <interactant intactId="EBI-12033434">
        <id>Q9UBY5</id>
    </interactant>
    <interactant intactId="EBI-13059134">
        <id>Q13520</id>
        <label>AQP6</label>
    </interactant>
    <organismsDiffer>false</organismsDiffer>
    <experiments>3</experiments>
</comment>
<comment type="interaction">
    <interactant intactId="EBI-12033434">
        <id>Q9UBY5</id>
    </interactant>
    <interactant intactId="EBI-11343438">
        <id>Q3SXY8</id>
        <label>ARL13B</label>
    </interactant>
    <organismsDiffer>false</organismsDiffer>
    <experiments>3</experiments>
</comment>
<comment type="interaction">
    <interactant intactId="EBI-12033434">
        <id>Q9UBY5</id>
    </interactant>
    <interactant intactId="EBI-12239061">
        <id>Q8WWH4</id>
        <label>ASZ1</label>
    </interactant>
    <organismsDiffer>false</organismsDiffer>
    <experiments>3</experiments>
</comment>
<comment type="interaction">
    <interactant intactId="EBI-12033434">
        <id>Q9UBY5</id>
    </interactant>
    <interactant intactId="EBI-747430">
        <id>Q9BXK5</id>
        <label>BCL2L13</label>
    </interactant>
    <organismsDiffer>false</organismsDiffer>
    <experiments>3</experiments>
</comment>
<comment type="interaction">
    <interactant intactId="EBI-12033434">
        <id>Q9UBY5</id>
    </interactant>
    <interactant intactId="EBI-18041102">
        <id>Q6UWD8</id>
        <label>C16orf54</label>
    </interactant>
    <organismsDiffer>false</organismsDiffer>
    <experiments>3</experiments>
</comment>
<comment type="interaction">
    <interactant intactId="EBI-12033434">
        <id>Q9UBY5</id>
    </interactant>
    <interactant intactId="EBI-6657396">
        <id>P19397</id>
        <label>CD53</label>
    </interactant>
    <organismsDiffer>false</organismsDiffer>
    <experiments>3</experiments>
</comment>
<comment type="interaction">
    <interactant intactId="EBI-12033434">
        <id>Q9UBY5</id>
    </interactant>
    <interactant intactId="EBI-12222807">
        <id>P04233-2</id>
        <label>CD74</label>
    </interactant>
    <organismsDiffer>false</organismsDiffer>
    <experiments>4</experiments>
</comment>
<comment type="interaction">
    <interactant intactId="EBI-12033434">
        <id>Q9UBY5</id>
    </interactant>
    <interactant intactId="EBI-7797864">
        <id>P11912</id>
        <label>CD79A</label>
    </interactant>
    <organismsDiffer>false</organismsDiffer>
    <experiments>3</experiments>
</comment>
<comment type="interaction">
    <interactant intactId="EBI-12033434">
        <id>Q9UBY5</id>
    </interactant>
    <interactant intactId="EBI-751440">
        <id>P57739</id>
        <label>CLDN2</label>
    </interactant>
    <organismsDiffer>false</organismsDiffer>
    <experiments>3</experiments>
</comment>
<comment type="interaction">
    <interactant intactId="EBI-12033434">
        <id>Q9UBY5</id>
    </interactant>
    <interactant intactId="EBI-740744">
        <id>O95471</id>
        <label>CLDN7</label>
    </interactant>
    <organismsDiffer>false</organismsDiffer>
    <experiments>3</experiments>
</comment>
<comment type="interaction">
    <interactant intactId="EBI-12033434">
        <id>Q9UBY5</id>
    </interactant>
    <interactant intactId="EBI-18341636">
        <id>O95484</id>
        <label>CLDN9</label>
    </interactant>
    <organismsDiffer>false</organismsDiffer>
    <experiments>3</experiments>
</comment>
<comment type="interaction">
    <interactant intactId="EBI-12033434">
        <id>Q9UBY5</id>
    </interactant>
    <interactant intactId="EBI-12811991">
        <id>Q2HXU8-2</id>
        <label>CLEC12B</label>
    </interactant>
    <organismsDiffer>false</organismsDiffer>
    <experiments>3</experiments>
</comment>
<comment type="interaction">
    <interactant intactId="EBI-12033434">
        <id>Q9UBY5</id>
    </interactant>
    <interactant intactId="EBI-18013275">
        <id>Q7Z7G2</id>
        <label>CPLX4</label>
    </interactant>
    <organismsDiffer>false</organismsDiffer>
    <experiments>3</experiments>
</comment>
<comment type="interaction">
    <interactant intactId="EBI-12033434">
        <id>Q9UBY5</id>
    </interactant>
    <interactant intactId="EBI-6942903">
        <id>Q96BA8</id>
        <label>CREB3L1</label>
    </interactant>
    <organismsDiffer>false</organismsDiffer>
    <experiments>5</experiments>
</comment>
<comment type="interaction">
    <interactant intactId="EBI-12033434">
        <id>Q9UBY5</id>
    </interactant>
    <interactant intactId="EBI-8646596">
        <id>P49447</id>
        <label>CYB561</label>
    </interactant>
    <organismsDiffer>false</organismsDiffer>
    <experiments>3</experiments>
</comment>
<comment type="interaction">
    <interactant intactId="EBI-12033434">
        <id>Q9UBY5</id>
    </interactant>
    <interactant intactId="EBI-8637742">
        <id>Q53TN4</id>
        <label>CYBRD1</label>
    </interactant>
    <organismsDiffer>false</organismsDiffer>
    <experiments>3</experiments>
</comment>
<comment type="interaction">
    <interactant intactId="EBI-12033434">
        <id>Q9UBY5</id>
    </interactant>
    <interactant intactId="EBI-529425">
        <id>Q92838</id>
        <label>EDA</label>
    </interactant>
    <organismsDiffer>false</organismsDiffer>
    <experiments>3</experiments>
</comment>
<comment type="interaction">
    <interactant intactId="EBI-12033434">
        <id>Q9UBY5</id>
    </interactant>
    <interactant intactId="EBI-781551">
        <id>Q9Y282</id>
        <label>ERGIC3</label>
    </interactant>
    <organismsDiffer>false</organismsDiffer>
    <experiments>3</experiments>
</comment>
<comment type="interaction">
    <interactant intactId="EBI-12033434">
        <id>Q9UBY5</id>
    </interactant>
    <interactant intactId="EBI-18304435">
        <id>Q5JX71</id>
        <label>FAM209A</label>
    </interactant>
    <organismsDiffer>false</organismsDiffer>
    <experiments>3</experiments>
</comment>
<comment type="interaction">
    <interactant intactId="EBI-12033434">
        <id>Q9UBY5</id>
    </interactant>
    <interactant intactId="EBI-18938272">
        <id>Q96KR6</id>
        <label>FAM210B</label>
    </interactant>
    <organismsDiffer>false</organismsDiffer>
    <experiments>3</experiments>
</comment>
<comment type="interaction">
    <interactant intactId="EBI-12033434">
        <id>Q9UBY5</id>
    </interactant>
    <interactant intactId="EBI-2833872">
        <id>O15552</id>
        <label>FFAR2</label>
    </interactant>
    <organismsDiffer>false</organismsDiffer>
    <experiments>3</experiments>
</comment>
<comment type="interaction">
    <interactant intactId="EBI-12033434">
        <id>Q9UBY5</id>
    </interactant>
    <interactant intactId="EBI-12142257">
        <id>Q8TBE3</id>
        <label>FNDC9</label>
    </interactant>
    <organismsDiffer>false</organismsDiffer>
    <experiments>3</experiments>
</comment>
<comment type="interaction">
    <interactant intactId="EBI-12033434">
        <id>Q9UBY5</id>
    </interactant>
    <interactant intactId="EBI-3909454">
        <id>O95377</id>
        <label>GJB5</label>
    </interactant>
    <organismsDiffer>false</organismsDiffer>
    <experiments>3</experiments>
</comment>
<comment type="interaction">
    <interactant intactId="EBI-12033434">
        <id>Q9UBY5</id>
    </interactant>
    <interactant intactId="EBI-3917143">
        <id>Q5T7V8</id>
        <label>GORAB</label>
    </interactant>
    <organismsDiffer>false</organismsDiffer>
    <experiments>3</experiments>
</comment>
<comment type="interaction">
    <interactant intactId="EBI-12033434">
        <id>Q9UBY5</id>
    </interactant>
    <interactant intactId="EBI-11721746">
        <id>Q8TED1</id>
        <label>GPX8</label>
    </interactant>
    <organismsDiffer>false</organismsDiffer>
    <experiments>3</experiments>
</comment>
<comment type="interaction">
    <interactant intactId="EBI-12033434">
        <id>Q9UBY5</id>
    </interactant>
    <interactant intactId="EBI-10266796">
        <id>Q8N5M9</id>
        <label>JAGN1</label>
    </interactant>
    <organismsDiffer>false</organismsDiffer>
    <experiments>3</experiments>
</comment>
<comment type="interaction">
    <interactant intactId="EBI-12033434">
        <id>Q9UBY5</id>
    </interactant>
    <interactant intactId="EBI-12830942">
        <id>P48547</id>
        <label>KCNC1</label>
    </interactant>
    <organismsDiffer>false</organismsDiffer>
    <experiments>3</experiments>
</comment>
<comment type="interaction">
    <interactant intactId="EBI-12033434">
        <id>Q9UBY5</id>
    </interactant>
    <interactant intactId="EBI-12017638">
        <id>P48051</id>
        <label>KCNJ6</label>
    </interactant>
    <organismsDiffer>false</organismsDiffer>
    <experiments>3</experiments>
</comment>
<comment type="interaction">
    <interactant intactId="EBI-12033434">
        <id>Q9UBY5</id>
    </interactant>
    <interactant intactId="EBI-750776">
        <id>O95214</id>
        <label>LEPROTL1</label>
    </interactant>
    <organismsDiffer>false</organismsDiffer>
    <experiments>3</experiments>
</comment>
<comment type="interaction">
    <interactant intactId="EBI-12033434">
        <id>Q9UBY5</id>
    </interactant>
    <interactant intactId="EBI-2820517">
        <id>Q8TAF8</id>
        <label>LHFPL5</label>
    </interactant>
    <organismsDiffer>false</organismsDiffer>
    <experiments>3</experiments>
</comment>
<comment type="interaction">
    <interactant intactId="EBI-12033434">
        <id>Q9UBY5</id>
    </interactant>
    <interactant intactId="EBI-2830566">
        <id>Q9H400</id>
        <label>LIME1</label>
    </interactant>
    <organismsDiffer>false</organismsDiffer>
    <experiments>3</experiments>
</comment>
<comment type="interaction">
    <interactant intactId="EBI-12033434">
        <id>Q9UBY5</id>
    </interactant>
    <interactant intactId="EBI-11956541">
        <id>Q9GZY8-5</id>
        <label>MFF</label>
    </interactant>
    <organismsDiffer>false</organismsDiffer>
    <experiments>3</experiments>
</comment>
<comment type="interaction">
    <interactant intactId="EBI-12033434">
        <id>Q9UBY5</id>
    </interactant>
    <interactant intactId="EBI-724754">
        <id>O14880</id>
        <label>MGST3</label>
    </interactant>
    <organismsDiffer>false</organismsDiffer>
    <experiments>3</experiments>
</comment>
<comment type="interaction">
    <interactant intactId="EBI-12033434">
        <id>Q9UBY5</id>
    </interactant>
    <interactant intactId="EBI-5454865">
        <id>Q6IN84</id>
        <label>MRM1</label>
    </interactant>
    <organismsDiffer>false</organismsDiffer>
    <experiments>3</experiments>
</comment>
<comment type="interaction">
    <interactant intactId="EBI-12033434">
        <id>Q9UBY5</id>
    </interactant>
    <interactant intactId="EBI-12820341">
        <id>Q96JQ5</id>
        <label>MS4A4A</label>
    </interactant>
    <organismsDiffer>false</organismsDiffer>
    <experiments>3</experiments>
</comment>
<comment type="interaction">
    <interactant intactId="EBI-12033434">
        <id>Q9UBY5</id>
    </interactant>
    <interactant intactId="EBI-2682365">
        <id>Q8N183</id>
        <label>NDUFAF2</label>
    </interactant>
    <organismsDiffer>false</organismsDiffer>
    <experiments>3</experiments>
</comment>
<comment type="interaction">
    <interactant intactId="EBI-12033434">
        <id>Q9UBY5</id>
    </interactant>
    <interactant intactId="EBI-12807478">
        <id>P35372-10</id>
        <label>OPRM1</label>
    </interactant>
    <organismsDiffer>false</organismsDiffer>
    <experiments>3</experiments>
</comment>
<comment type="interaction">
    <interactant intactId="EBI-12033434">
        <id>Q9UBY5</id>
    </interactant>
    <interactant intactId="EBI-1050125">
        <id>O15173</id>
        <label>PGRMC2</label>
    </interactant>
    <organismsDiffer>false</organismsDiffer>
    <experiments>3</experiments>
</comment>
<comment type="interaction">
    <interactant intactId="EBI-12033434">
        <id>Q9UBY5</id>
    </interactant>
    <interactant intactId="EBI-10269209">
        <id>Q8NC24</id>
        <label>RELL2</label>
    </interactant>
    <organismsDiffer>false</organismsDiffer>
    <experiments>3</experiments>
</comment>
<comment type="interaction">
    <interactant intactId="EBI-12033434">
        <id>Q9UBY5</id>
    </interactant>
    <interactant intactId="EBI-10192441">
        <id>Q86VR2</id>
        <label>RETREG3</label>
    </interactant>
    <organismsDiffer>false</organismsDiffer>
    <experiments>5</experiments>
</comment>
<comment type="interaction">
    <interactant intactId="EBI-12033434">
        <id>Q9UBY5</id>
    </interactant>
    <interactant intactId="EBI-17247926">
        <id>Q9NY72</id>
        <label>SCN3B</label>
    </interactant>
    <organismsDiffer>false</organismsDiffer>
    <experiments>3</experiments>
</comment>
<comment type="interaction">
    <interactant intactId="EBI-12033434">
        <id>Q9UBY5</id>
    </interactant>
    <interactant intactId="EBI-10977284">
        <id>Q8NHU3</id>
        <label>SGMS2</label>
    </interactant>
    <organismsDiffer>false</organismsDiffer>
    <experiments>3</experiments>
</comment>
<comment type="interaction">
    <interactant intactId="EBI-12033434">
        <id>Q9UBY5</id>
    </interactant>
    <interactant intactId="EBI-18037857">
        <id>Q3SXP7</id>
        <label>SHISAL1</label>
    </interactant>
    <organismsDiffer>false</organismsDiffer>
    <experiments>3</experiments>
</comment>
<comment type="interaction">
    <interactant intactId="EBI-12033434">
        <id>Q9UBY5</id>
    </interactant>
    <interactant intactId="EBI-18159983">
        <id>Q3KNW5</id>
        <label>SLC10A6</label>
    </interactant>
    <organismsDiffer>false</organismsDiffer>
    <experiments>3</experiments>
</comment>
<comment type="interaction">
    <interactant intactId="EBI-12033434">
        <id>Q9UBY5</id>
    </interactant>
    <interactant intactId="EBI-17295964">
        <id>Q9NQQ7-3</id>
        <label>SLC35C2</label>
    </interactant>
    <organismsDiffer>false</organismsDiffer>
    <experiments>3</experiments>
</comment>
<comment type="interaction">
    <interactant intactId="EBI-12033434">
        <id>Q9UBY5</id>
    </interactant>
    <interactant intactId="EBI-12246506">
        <id>O14948-3</id>
        <label>TFEC</label>
    </interactant>
    <organismsDiffer>false</organismsDiffer>
    <experiments>3</experiments>
</comment>
<comment type="interaction">
    <interactant intactId="EBI-12033434">
        <id>Q9UBY5</id>
    </interactant>
    <interactant intactId="EBI-726691">
        <id>Q8WY91</id>
        <label>THAP4</label>
    </interactant>
    <organismsDiffer>false</organismsDiffer>
    <experiments>3</experiments>
</comment>
<comment type="interaction">
    <interactant intactId="EBI-12033434">
        <id>Q9UBY5</id>
    </interactant>
    <interactant intactId="EBI-8638294">
        <id>Q9NUH8</id>
        <label>TMEM14B</label>
    </interactant>
    <organismsDiffer>false</organismsDiffer>
    <experiments>3</experiments>
</comment>
<comment type="interaction">
    <interactant intactId="EBI-12033434">
        <id>Q9UBY5</id>
    </interactant>
    <interactant intactId="EBI-10982110">
        <id>Q96Q45-2</id>
        <label>TMEM237</label>
    </interactant>
    <organismsDiffer>false</organismsDiffer>
    <experiments>3</experiments>
</comment>
<comment type="interaction">
    <interactant intactId="EBI-12033434">
        <id>Q9UBY5</id>
    </interactant>
    <interactant intactId="EBI-10288884">
        <id>Q96HV5</id>
        <label>TMEM41A</label>
    </interactant>
    <organismsDiffer>false</organismsDiffer>
    <experiments>3</experiments>
</comment>
<comment type="interaction">
    <interactant intactId="EBI-12033434">
        <id>Q9UBY5</id>
    </interactant>
    <interactant intactId="EBI-18178701">
        <id>Q4KMG9</id>
        <label>TMEM52B</label>
    </interactant>
    <organismsDiffer>false</organismsDiffer>
    <experiments>3</experiments>
</comment>
<comment type="interaction">
    <interactant intactId="EBI-12033434">
        <id>Q9UBY5</id>
    </interactant>
    <interactant intactId="EBI-726363">
        <id>Q9BUB7</id>
        <label>TMEM70</label>
    </interactant>
    <organismsDiffer>false</organismsDiffer>
    <experiments>3</experiments>
</comment>
<comment type="interaction">
    <interactant intactId="EBI-12033434">
        <id>Q9UBY5</id>
    </interactant>
    <interactant intactId="EBI-8649725">
        <id>Q9BSE2</id>
        <label>TMEM79</label>
    </interactant>
    <organismsDiffer>false</organismsDiffer>
    <experiments>3</experiments>
</comment>
<comment type="subcellular location">
    <subcellularLocation>
        <location>Cell membrane</location>
        <topology>Multi-pass membrane protein</topology>
    </subcellularLocation>
</comment>
<comment type="tissue specificity">
    <text>Most abundantly expressed in prostate, testes, pancreas, and heart, with moderate levels in lung and ovary. No detectable expression in brain, placenta, liver, skeletal muscle, kidney, spleen, thymus, small intestine, colon, or peripheral blood leukocytes.</text>
</comment>
<comment type="similarity">
    <text evidence="3">Belongs to the G-protein coupled receptor 1 family.</text>
</comment>
<reference key="1">
    <citation type="journal article" date="1999" name="J. Biol. Chem.">
        <title>Molecular cloning and characterization of a novel human G-protein-coupled receptor, EDG7, for lysophosphatidic acid.</title>
        <authorList>
            <person name="Bandoh K."/>
            <person name="Aoki J."/>
            <person name="Hosono H."/>
            <person name="Kobayashi S."/>
            <person name="Kobayashi T."/>
            <person name="Murakami-Murofushi K."/>
            <person name="Tsujimoto M."/>
            <person name="Arai H."/>
            <person name="Inoue K."/>
        </authorList>
    </citation>
    <scope>NUCLEOTIDE SEQUENCE [MRNA]</scope>
    <source>
        <tissue>T-cell</tissue>
    </source>
</reference>
<reference key="2">
    <citation type="journal article" date="2000" name="Mol. Pharmacol.">
        <title>Molecular cloning and characterization of a lysophosphatidic acid receptor, Edg-7, expressed in prostate.</title>
        <authorList>
            <person name="Im D.-S."/>
            <person name="Heise C.E."/>
            <person name="Harding M.A."/>
            <person name="George S.R."/>
            <person name="O'Dowd B.F."/>
            <person name="Theodorescu D."/>
            <person name="Lynch K.R."/>
        </authorList>
    </citation>
    <scope>NUCLEOTIDE SEQUENCE [MRNA]</scope>
    <source>
        <tissue>Embryonic kidney</tissue>
    </source>
</reference>
<reference key="3">
    <citation type="submission" date="2003-06" db="EMBL/GenBank/DDBJ databases">
        <title>cDNA clones of human proteins involved in signal transduction sequenced by the Guthrie cDNA resource center (www.cdna.org).</title>
        <authorList>
            <person name="Kopatz S.A."/>
            <person name="Aronstam R.S."/>
            <person name="Sharma S.V."/>
        </authorList>
    </citation>
    <scope>NUCLEOTIDE SEQUENCE [LARGE SCALE MRNA]</scope>
    <source>
        <tissue>Testis</tissue>
    </source>
</reference>
<reference key="4">
    <citation type="journal article" date="2004" name="Genome Res.">
        <title>The status, quality, and expansion of the NIH full-length cDNA project: the Mammalian Gene Collection (MGC).</title>
        <authorList>
            <consortium name="The MGC Project Team"/>
        </authorList>
    </citation>
    <scope>NUCLEOTIDE SEQUENCE [LARGE SCALE MRNA]</scope>
</reference>
<reference key="5">
    <citation type="journal article" date="2000" name="Mol. Pharmacol.">
        <title>Lysophosphatidic acid receptors.</title>
        <authorList>
            <person name="Contos J.J.A."/>
            <person name="Ishii I."/>
            <person name="Chun J."/>
        </authorList>
    </citation>
    <scope>REVIEW</scope>
</reference>
<evidence type="ECO:0000250" key="1"/>
<evidence type="ECO:0000255" key="2"/>
<evidence type="ECO:0000255" key="3">
    <source>
        <dbReference type="PROSITE-ProRule" id="PRU00521"/>
    </source>
</evidence>
<feature type="chain" id="PRO_0000069433" description="Lysophosphatidic acid receptor 3">
    <location>
        <begin position="1"/>
        <end position="353"/>
    </location>
</feature>
<feature type="topological domain" description="Extracellular" evidence="2">
    <location>
        <begin position="1"/>
        <end position="31"/>
    </location>
</feature>
<feature type="transmembrane region" description="Helical; Name=1" evidence="2">
    <location>
        <begin position="32"/>
        <end position="52"/>
    </location>
</feature>
<feature type="topological domain" description="Cytoplasmic" evidence="2">
    <location>
        <begin position="53"/>
        <end position="67"/>
    </location>
</feature>
<feature type="transmembrane region" description="Helical; Name=2" evidence="2">
    <location>
        <begin position="68"/>
        <end position="88"/>
    </location>
</feature>
<feature type="topological domain" description="Extracellular" evidence="2">
    <location>
        <begin position="89"/>
        <end position="101"/>
    </location>
</feature>
<feature type="transmembrane region" description="Helical; Name=3" evidence="2">
    <location>
        <begin position="102"/>
        <end position="124"/>
    </location>
</feature>
<feature type="topological domain" description="Cytoplasmic" evidence="2">
    <location>
        <begin position="125"/>
        <end position="146"/>
    </location>
</feature>
<feature type="transmembrane region" description="Helical; Name=4" evidence="2">
    <location>
        <begin position="147"/>
        <end position="167"/>
    </location>
</feature>
<feature type="topological domain" description="Extracellular" evidence="2">
    <location>
        <begin position="168"/>
        <end position="186"/>
    </location>
</feature>
<feature type="transmembrane region" description="Helical; Name=5" evidence="2">
    <location>
        <begin position="187"/>
        <end position="207"/>
    </location>
</feature>
<feature type="topological domain" description="Cytoplasmic" evidence="2">
    <location>
        <begin position="208"/>
        <end position="240"/>
    </location>
</feature>
<feature type="transmembrane region" description="Helical; Name=6" evidence="2">
    <location>
        <begin position="241"/>
        <end position="261"/>
    </location>
</feature>
<feature type="topological domain" description="Extracellular" evidence="2">
    <location>
        <begin position="262"/>
        <end position="276"/>
    </location>
</feature>
<feature type="transmembrane region" description="Helical; Name=7" evidence="2">
    <location>
        <begin position="277"/>
        <end position="297"/>
    </location>
</feature>
<feature type="topological domain" description="Cytoplasmic" evidence="2">
    <location>
        <begin position="298"/>
        <end position="353"/>
    </location>
</feature>
<feature type="lipid moiety-binding region" description="S-palmitoyl cysteine" evidence="1">
    <location>
        <position position="309"/>
    </location>
</feature>
<feature type="glycosylation site" description="N-linked (GlcNAc...) asparagine" evidence="2">
    <location>
        <position position="15"/>
    </location>
</feature>
<feature type="glycosylation site" description="N-linked (GlcNAc...) asparagine" evidence="2">
    <location>
        <position position="172"/>
    </location>
</feature>
<feature type="sequence variant" id="VAR_049415" description="In dbSNP:rs35745543.">
    <original>R</original>
    <variation>Q</variation>
    <location>
        <position position="231"/>
    </location>
</feature>
<dbReference type="EMBL" id="AF127138">
    <property type="protein sequence ID" value="AAD56311.1"/>
    <property type="molecule type" value="mRNA"/>
</dbReference>
<dbReference type="EMBL" id="AF186380">
    <property type="protein sequence ID" value="AAF00530.1"/>
    <property type="molecule type" value="mRNA"/>
</dbReference>
<dbReference type="EMBL" id="AY322547">
    <property type="protein sequence ID" value="AAP84360.1"/>
    <property type="molecule type" value="mRNA"/>
</dbReference>
<dbReference type="EMBL" id="BC126268">
    <property type="protein sequence ID" value="AAI26269.1"/>
    <property type="molecule type" value="mRNA"/>
</dbReference>
<dbReference type="EMBL" id="BC126270">
    <property type="protein sequence ID" value="AAI26271.1"/>
    <property type="molecule type" value="mRNA"/>
</dbReference>
<dbReference type="CCDS" id="CCDS700.1"/>
<dbReference type="RefSeq" id="NP_036284.1">
    <property type="nucleotide sequence ID" value="NM_012152.3"/>
</dbReference>
<dbReference type="RefSeq" id="XP_054191685.1">
    <property type="nucleotide sequence ID" value="XM_054335710.1"/>
</dbReference>
<dbReference type="SMR" id="Q9UBY5"/>
<dbReference type="BioGRID" id="117108">
    <property type="interactions" value="102"/>
</dbReference>
<dbReference type="CORUM" id="Q9UBY5"/>
<dbReference type="FunCoup" id="Q9UBY5">
    <property type="interactions" value="1556"/>
</dbReference>
<dbReference type="IntAct" id="Q9UBY5">
    <property type="interactions" value="56"/>
</dbReference>
<dbReference type="STRING" id="9606.ENSP00000359643"/>
<dbReference type="BindingDB" id="Q9UBY5"/>
<dbReference type="ChEMBL" id="CHEMBL3250"/>
<dbReference type="DrugBank" id="DB18124">
    <property type="generic name" value="Fipaxalparant"/>
</dbReference>
<dbReference type="GuidetoPHARMACOLOGY" id="274"/>
<dbReference type="SwissLipids" id="SLP:000001572"/>
<dbReference type="GlyCosmos" id="Q9UBY5">
    <property type="glycosylation" value="2 sites, No reported glycans"/>
</dbReference>
<dbReference type="GlyGen" id="Q9UBY5">
    <property type="glycosylation" value="3 sites, 2 N-linked glycans (2 sites)"/>
</dbReference>
<dbReference type="iPTMnet" id="Q9UBY5"/>
<dbReference type="PhosphoSitePlus" id="Q9UBY5"/>
<dbReference type="SwissPalm" id="Q9UBY5"/>
<dbReference type="BioMuta" id="LPAR3"/>
<dbReference type="DMDM" id="26393418"/>
<dbReference type="jPOST" id="Q9UBY5"/>
<dbReference type="MassIVE" id="Q9UBY5"/>
<dbReference type="PaxDb" id="9606-ENSP00000395389"/>
<dbReference type="PeptideAtlas" id="Q9UBY5"/>
<dbReference type="ProteomicsDB" id="84099"/>
<dbReference type="Antibodypedia" id="2955">
    <property type="antibodies" value="337 antibodies from 36 providers"/>
</dbReference>
<dbReference type="DNASU" id="23566"/>
<dbReference type="Ensembl" id="ENST00000370611.4">
    <property type="protein sequence ID" value="ENSP00000359643.3"/>
    <property type="gene ID" value="ENSG00000171517.6"/>
</dbReference>
<dbReference type="Ensembl" id="ENST00000440886.1">
    <property type="protein sequence ID" value="ENSP00000395389.1"/>
    <property type="gene ID" value="ENSG00000171517.6"/>
</dbReference>
<dbReference type="GeneID" id="23566"/>
<dbReference type="KEGG" id="hsa:23566"/>
<dbReference type="MANE-Select" id="ENST00000370611.4">
    <property type="protein sequence ID" value="ENSP00000359643.3"/>
    <property type="RefSeq nucleotide sequence ID" value="NM_012152.3"/>
    <property type="RefSeq protein sequence ID" value="NP_036284.1"/>
</dbReference>
<dbReference type="UCSC" id="uc001dkl.3">
    <property type="organism name" value="human"/>
</dbReference>
<dbReference type="AGR" id="HGNC:14298"/>
<dbReference type="CTD" id="23566"/>
<dbReference type="DisGeNET" id="23566"/>
<dbReference type="GeneCards" id="LPAR3"/>
<dbReference type="HGNC" id="HGNC:14298">
    <property type="gene designation" value="LPAR3"/>
</dbReference>
<dbReference type="HPA" id="ENSG00000171517">
    <property type="expression patterns" value="Tissue enhanced (fallopian)"/>
</dbReference>
<dbReference type="MIM" id="605106">
    <property type="type" value="gene"/>
</dbReference>
<dbReference type="neXtProt" id="NX_Q9UBY5"/>
<dbReference type="OpenTargets" id="ENSG00000171517"/>
<dbReference type="PharmGKB" id="PA162394213"/>
<dbReference type="VEuPathDB" id="HostDB:ENSG00000171517"/>
<dbReference type="eggNOG" id="KOG3656">
    <property type="taxonomic scope" value="Eukaryota"/>
</dbReference>
<dbReference type="GeneTree" id="ENSGT01120000271896"/>
<dbReference type="HOGENOM" id="CLU_047979_0_0_1"/>
<dbReference type="InParanoid" id="Q9UBY5"/>
<dbReference type="OMA" id="HMSVVRM"/>
<dbReference type="OrthoDB" id="9863803at2759"/>
<dbReference type="PAN-GO" id="Q9UBY5">
    <property type="GO annotations" value="5 GO annotations based on evolutionary models"/>
</dbReference>
<dbReference type="PhylomeDB" id="Q9UBY5"/>
<dbReference type="TreeFam" id="TF330052"/>
<dbReference type="PathwayCommons" id="Q9UBY5"/>
<dbReference type="Reactome" id="R-HSA-416476">
    <property type="pathway name" value="G alpha (q) signalling events"/>
</dbReference>
<dbReference type="Reactome" id="R-HSA-418594">
    <property type="pathway name" value="G alpha (i) signalling events"/>
</dbReference>
<dbReference type="Reactome" id="R-HSA-419408">
    <property type="pathway name" value="Lysosphingolipid and LPA receptors"/>
</dbReference>
<dbReference type="SignaLink" id="Q9UBY5"/>
<dbReference type="SIGNOR" id="Q9UBY5"/>
<dbReference type="BioGRID-ORCS" id="23566">
    <property type="hits" value="10 hits in 1146 CRISPR screens"/>
</dbReference>
<dbReference type="ChiTaRS" id="LPAR3">
    <property type="organism name" value="human"/>
</dbReference>
<dbReference type="GeneWiki" id="LPAR3"/>
<dbReference type="GenomeRNAi" id="23566"/>
<dbReference type="Pharos" id="Q9UBY5">
    <property type="development level" value="Tchem"/>
</dbReference>
<dbReference type="PRO" id="PR:Q9UBY5"/>
<dbReference type="Proteomes" id="UP000005640">
    <property type="component" value="Chromosome 1"/>
</dbReference>
<dbReference type="RNAct" id="Q9UBY5">
    <property type="molecule type" value="protein"/>
</dbReference>
<dbReference type="Bgee" id="ENSG00000171517">
    <property type="expression patterns" value="Expressed in bronchial epithelial cell and 136 other cell types or tissues"/>
</dbReference>
<dbReference type="GO" id="GO:0030424">
    <property type="term" value="C:axon"/>
    <property type="evidence" value="ECO:0007669"/>
    <property type="project" value="Ensembl"/>
</dbReference>
<dbReference type="GO" id="GO:0005929">
    <property type="term" value="C:cilium"/>
    <property type="evidence" value="ECO:0000314"/>
    <property type="project" value="HPA"/>
</dbReference>
<dbReference type="GO" id="GO:0005737">
    <property type="term" value="C:cytoplasm"/>
    <property type="evidence" value="ECO:0000318"/>
    <property type="project" value="GO_Central"/>
</dbReference>
<dbReference type="GO" id="GO:0005886">
    <property type="term" value="C:plasma membrane"/>
    <property type="evidence" value="ECO:0000314"/>
    <property type="project" value="HPA"/>
</dbReference>
<dbReference type="GO" id="GO:0045202">
    <property type="term" value="C:synapse"/>
    <property type="evidence" value="ECO:0007669"/>
    <property type="project" value="GOC"/>
</dbReference>
<dbReference type="GO" id="GO:0004930">
    <property type="term" value="F:G protein-coupled receptor activity"/>
    <property type="evidence" value="ECO:0000318"/>
    <property type="project" value="GO_Central"/>
</dbReference>
<dbReference type="GO" id="GO:0001965">
    <property type="term" value="F:G-protein alpha-subunit binding"/>
    <property type="evidence" value="ECO:0007669"/>
    <property type="project" value="Ensembl"/>
</dbReference>
<dbReference type="GO" id="GO:0008289">
    <property type="term" value="F:lipid binding"/>
    <property type="evidence" value="ECO:0000304"/>
    <property type="project" value="ProtInc"/>
</dbReference>
<dbReference type="GO" id="GO:0070915">
    <property type="term" value="F:lysophosphatidic acid receptor activity"/>
    <property type="evidence" value="ECO:0007669"/>
    <property type="project" value="InterPro"/>
</dbReference>
<dbReference type="GO" id="GO:0005543">
    <property type="term" value="F:phospholipid binding"/>
    <property type="evidence" value="ECO:0007669"/>
    <property type="project" value="Ensembl"/>
</dbReference>
<dbReference type="GO" id="GO:0007189">
    <property type="term" value="P:adenylate cyclase-activating G protein-coupled receptor signaling pathway"/>
    <property type="evidence" value="ECO:0000318"/>
    <property type="project" value="GO_Central"/>
</dbReference>
<dbReference type="GO" id="GO:0032060">
    <property type="term" value="P:bleb assembly"/>
    <property type="evidence" value="ECO:0007669"/>
    <property type="project" value="Ensembl"/>
</dbReference>
<dbReference type="GO" id="GO:0007268">
    <property type="term" value="P:chemical synaptic transmission"/>
    <property type="evidence" value="ECO:0000304"/>
    <property type="project" value="ProtInc"/>
</dbReference>
<dbReference type="GO" id="GO:0048668">
    <property type="term" value="P:collateral sprouting"/>
    <property type="evidence" value="ECO:0007669"/>
    <property type="project" value="Ensembl"/>
</dbReference>
<dbReference type="GO" id="GO:0007187">
    <property type="term" value="P:G protein-coupled receptor signaling pathway, coupled to cyclic nucleotide second messenger"/>
    <property type="evidence" value="ECO:0000304"/>
    <property type="project" value="ProtInc"/>
</dbReference>
<dbReference type="GO" id="GO:0010467">
    <property type="term" value="P:gene expression"/>
    <property type="evidence" value="ECO:0007669"/>
    <property type="project" value="Ensembl"/>
</dbReference>
<dbReference type="GO" id="GO:0051928">
    <property type="term" value="P:positive regulation of calcium ion transport"/>
    <property type="evidence" value="ECO:0007669"/>
    <property type="project" value="Ensembl"/>
</dbReference>
<dbReference type="GO" id="GO:0048672">
    <property type="term" value="P:positive regulation of collateral sprouting"/>
    <property type="evidence" value="ECO:0007669"/>
    <property type="project" value="Ensembl"/>
</dbReference>
<dbReference type="GO" id="GO:0007204">
    <property type="term" value="P:positive regulation of cytosolic calcium ion concentration"/>
    <property type="evidence" value="ECO:0000304"/>
    <property type="project" value="ProtInc"/>
</dbReference>
<dbReference type="GO" id="GO:0043410">
    <property type="term" value="P:positive regulation of MAPK cascade"/>
    <property type="evidence" value="ECO:0007669"/>
    <property type="project" value="Ensembl"/>
</dbReference>
<dbReference type="GO" id="GO:0019222">
    <property type="term" value="P:regulation of metabolic process"/>
    <property type="evidence" value="ECO:0000318"/>
    <property type="project" value="GO_Central"/>
</dbReference>
<dbReference type="CDD" id="cd15343">
    <property type="entry name" value="7tmA_LPAR3_Edg7"/>
    <property type="match status" value="1"/>
</dbReference>
<dbReference type="FunFam" id="1.20.1070.10:FF:000025">
    <property type="entry name" value="Lysophosphatidic acid receptor 1"/>
    <property type="match status" value="1"/>
</dbReference>
<dbReference type="Gene3D" id="1.20.1070.10">
    <property type="entry name" value="Rhodopsin 7-helix transmembrane proteins"/>
    <property type="match status" value="1"/>
</dbReference>
<dbReference type="InterPro" id="IPR000276">
    <property type="entry name" value="GPCR_Rhodpsn"/>
</dbReference>
<dbReference type="InterPro" id="IPR017452">
    <property type="entry name" value="GPCR_Rhodpsn_7TM"/>
</dbReference>
<dbReference type="InterPro" id="IPR004065">
    <property type="entry name" value="LPA_rcpt"/>
</dbReference>
<dbReference type="InterPro" id="IPR005385">
    <property type="entry name" value="LPA_rcpt_EDG7"/>
</dbReference>
<dbReference type="PANTHER" id="PTHR22750">
    <property type="entry name" value="G-PROTEIN COUPLED RECEPTOR"/>
    <property type="match status" value="1"/>
</dbReference>
<dbReference type="Pfam" id="PF00001">
    <property type="entry name" value="7tm_1"/>
    <property type="match status" value="1"/>
</dbReference>
<dbReference type="PRINTS" id="PR01560">
    <property type="entry name" value="EDG7RECEPTOR"/>
</dbReference>
<dbReference type="PRINTS" id="PR00237">
    <property type="entry name" value="GPCRRHODOPSN"/>
</dbReference>
<dbReference type="PRINTS" id="PR01527">
    <property type="entry name" value="LPARECEPTOR"/>
</dbReference>
<dbReference type="SMART" id="SM01381">
    <property type="entry name" value="7TM_GPCR_Srsx"/>
    <property type="match status" value="1"/>
</dbReference>
<dbReference type="SUPFAM" id="SSF81321">
    <property type="entry name" value="Family A G protein-coupled receptor-like"/>
    <property type="match status" value="1"/>
</dbReference>
<dbReference type="PROSITE" id="PS00237">
    <property type="entry name" value="G_PROTEIN_RECEP_F1_1"/>
    <property type="match status" value="1"/>
</dbReference>
<dbReference type="PROSITE" id="PS50262">
    <property type="entry name" value="G_PROTEIN_RECEP_F1_2"/>
    <property type="match status" value="1"/>
</dbReference>